<accession>Q7U923</accession>
<proteinExistence type="inferred from homology"/>
<organism>
    <name type="scientific">Parasynechococcus marenigrum (strain WH8102)</name>
    <dbReference type="NCBI Taxonomy" id="84588"/>
    <lineage>
        <taxon>Bacteria</taxon>
        <taxon>Bacillati</taxon>
        <taxon>Cyanobacteriota</taxon>
        <taxon>Cyanophyceae</taxon>
        <taxon>Synechococcales</taxon>
        <taxon>Prochlorococcaceae</taxon>
        <taxon>Parasynechococcus</taxon>
        <taxon>Parasynechococcus marenigrum</taxon>
    </lineage>
</organism>
<evidence type="ECO:0000250" key="1"/>
<evidence type="ECO:0000255" key="2"/>
<evidence type="ECO:0000305" key="3"/>
<dbReference type="EC" id="4.3.2.10"/>
<dbReference type="EMBL" id="BX569690">
    <property type="protein sequence ID" value="CAE06951.1"/>
    <property type="molecule type" value="Genomic_DNA"/>
</dbReference>
<dbReference type="RefSeq" id="WP_011127310.1">
    <property type="nucleotide sequence ID" value="NC_005070.1"/>
</dbReference>
<dbReference type="SMR" id="Q7U923"/>
<dbReference type="STRING" id="84588.SYNW0436"/>
<dbReference type="KEGG" id="syw:SYNW0436"/>
<dbReference type="eggNOG" id="COG0107">
    <property type="taxonomic scope" value="Bacteria"/>
</dbReference>
<dbReference type="HOGENOM" id="CLU_048577_4_0_3"/>
<dbReference type="UniPathway" id="UPA00031">
    <property type="reaction ID" value="UER00010"/>
</dbReference>
<dbReference type="Proteomes" id="UP000001422">
    <property type="component" value="Chromosome"/>
</dbReference>
<dbReference type="GO" id="GO:0005737">
    <property type="term" value="C:cytoplasm"/>
    <property type="evidence" value="ECO:0007669"/>
    <property type="project" value="UniProtKB-SubCell"/>
</dbReference>
<dbReference type="GO" id="GO:0000107">
    <property type="term" value="F:imidazoleglycerol-phosphate synthase activity"/>
    <property type="evidence" value="ECO:0007669"/>
    <property type="project" value="InterPro"/>
</dbReference>
<dbReference type="GO" id="GO:0016829">
    <property type="term" value="F:lyase activity"/>
    <property type="evidence" value="ECO:0007669"/>
    <property type="project" value="UniProtKB-KW"/>
</dbReference>
<dbReference type="GO" id="GO:0000105">
    <property type="term" value="P:L-histidine biosynthetic process"/>
    <property type="evidence" value="ECO:0007669"/>
    <property type="project" value="UniProtKB-UniPathway"/>
</dbReference>
<dbReference type="CDD" id="cd04731">
    <property type="entry name" value="HisF"/>
    <property type="match status" value="1"/>
</dbReference>
<dbReference type="Gene3D" id="3.20.20.70">
    <property type="entry name" value="Aldolase class I"/>
    <property type="match status" value="1"/>
</dbReference>
<dbReference type="InterPro" id="IPR013785">
    <property type="entry name" value="Aldolase_TIM"/>
</dbReference>
<dbReference type="InterPro" id="IPR006062">
    <property type="entry name" value="His_biosynth"/>
</dbReference>
<dbReference type="InterPro" id="IPR004651">
    <property type="entry name" value="HisF"/>
</dbReference>
<dbReference type="InterPro" id="IPR050064">
    <property type="entry name" value="IGPS_HisA/HisF"/>
</dbReference>
<dbReference type="InterPro" id="IPR011060">
    <property type="entry name" value="RibuloseP-bd_barrel"/>
</dbReference>
<dbReference type="PANTHER" id="PTHR21235:SF2">
    <property type="entry name" value="IMIDAZOLE GLYCEROL PHOSPHATE SYNTHASE HISHF"/>
    <property type="match status" value="1"/>
</dbReference>
<dbReference type="PANTHER" id="PTHR21235">
    <property type="entry name" value="IMIDAZOLE GLYCEROL PHOSPHATE SYNTHASE SUBUNIT HISF/H IGP SYNTHASE SUBUNIT HISF/H"/>
    <property type="match status" value="1"/>
</dbReference>
<dbReference type="Pfam" id="PF00977">
    <property type="entry name" value="His_biosynth"/>
    <property type="match status" value="1"/>
</dbReference>
<dbReference type="SUPFAM" id="SSF51366">
    <property type="entry name" value="Ribulose-phoshate binding barrel"/>
    <property type="match status" value="1"/>
</dbReference>
<comment type="function">
    <text evidence="1">IGPS catalyzes the conversion of PRFAR and glutamine to IGP, AICAR and glutamate. The HisF subunit catalyzes the cyclization activity that produces IGP and AICAR from PRFAR using the ammonia provided by the HisH subunit (By similarity).</text>
</comment>
<comment type="catalytic activity">
    <reaction>
        <text>5-[(5-phospho-1-deoxy-D-ribulos-1-ylimino)methylamino]-1-(5-phospho-beta-D-ribosyl)imidazole-4-carboxamide + L-glutamine = D-erythro-1-(imidazol-4-yl)glycerol 3-phosphate + 5-amino-1-(5-phospho-beta-D-ribosyl)imidazole-4-carboxamide + L-glutamate + H(+)</text>
        <dbReference type="Rhea" id="RHEA:24793"/>
        <dbReference type="ChEBI" id="CHEBI:15378"/>
        <dbReference type="ChEBI" id="CHEBI:29985"/>
        <dbReference type="ChEBI" id="CHEBI:58278"/>
        <dbReference type="ChEBI" id="CHEBI:58359"/>
        <dbReference type="ChEBI" id="CHEBI:58475"/>
        <dbReference type="ChEBI" id="CHEBI:58525"/>
        <dbReference type="EC" id="4.3.2.10"/>
    </reaction>
</comment>
<comment type="pathway">
    <text>Amino-acid biosynthesis; L-histidine biosynthesis; L-histidine from 5-phospho-alpha-D-ribose 1-diphosphate: step 5/9.</text>
</comment>
<comment type="subunit">
    <text evidence="1">Heterodimer of HisH and HisF.</text>
</comment>
<comment type="subcellular location">
    <subcellularLocation>
        <location evidence="1">Cytoplasm</location>
    </subcellularLocation>
</comment>
<comment type="similarity">
    <text evidence="3">Belongs to the HisA/HisF family.</text>
</comment>
<comment type="caution">
    <text evidence="3">The potential active site Asp residue in position 11 is replaced by a Leu.</text>
</comment>
<sequence length="269" mass="30317">MSKKRIIFVLLYCDGFFCLSRNFKLQRIGDFRWLQRNYNFNYSATFIDELIILDISRKSRDINKFATLLYNLSENIFVPITAGGGIRSFEDAKVLFENGADKVCLNTSLIQCPHVSEKISSVYGQQSLVASIDFKHDHGDFKFFIDNGLIEVQYNIQELISFLDPLPFCEILLQSVDRDGTGTGFDLTLANTFRDQLSKPIILLGGAGHSDHLVEGLLHQSTDAVATAHLLNFVGDGLKLSREQAQRHSEVSLARWPLLSSTSFSTTKH</sequence>
<keyword id="KW-0028">Amino-acid biosynthesis</keyword>
<keyword id="KW-0963">Cytoplasm</keyword>
<keyword id="KW-0368">Histidine biosynthesis</keyword>
<keyword id="KW-0456">Lyase</keyword>
<protein>
    <recommendedName>
        <fullName>Putative imidazole glycerol phosphate synthase subunit hisF2</fullName>
        <ecNumber>4.3.2.10</ecNumber>
    </recommendedName>
    <alternativeName>
        <fullName>IGP synthase cyclase subunit</fullName>
    </alternativeName>
    <alternativeName>
        <fullName>IGP synthase subunit hisF2</fullName>
    </alternativeName>
    <alternativeName>
        <fullName>ImGP synthase subunit hisF2</fullName>
        <shortName>IGPS subunit hisF2</shortName>
    </alternativeName>
</protein>
<feature type="chain" id="PRO_0000142248" description="Putative imidazole glycerol phosphate synthase subunit hisF2">
    <location>
        <begin position="1"/>
        <end position="269"/>
    </location>
</feature>
<feature type="active site" evidence="2">
    <location>
        <position position="133"/>
    </location>
</feature>
<gene>
    <name type="primary">hisF2</name>
    <name type="ordered locus">SYNW0436</name>
</gene>
<name>HIS62_PARMW</name>
<reference key="1">
    <citation type="journal article" date="2003" name="Nature">
        <title>The genome of a motile marine Synechococcus.</title>
        <authorList>
            <person name="Palenik B."/>
            <person name="Brahamsha B."/>
            <person name="Larimer F.W."/>
            <person name="Land M.L."/>
            <person name="Hauser L."/>
            <person name="Chain P."/>
            <person name="Lamerdin J.E."/>
            <person name="Regala W."/>
            <person name="Allen E.E."/>
            <person name="McCarren J."/>
            <person name="Paulsen I.T."/>
            <person name="Dufresne A."/>
            <person name="Partensky F."/>
            <person name="Webb E.A."/>
            <person name="Waterbury J."/>
        </authorList>
    </citation>
    <scope>NUCLEOTIDE SEQUENCE [LARGE SCALE GENOMIC DNA]</scope>
    <source>
        <strain>WH8102</strain>
    </source>
</reference>